<evidence type="ECO:0000255" key="1">
    <source>
        <dbReference type="HAMAP-Rule" id="MF_00465"/>
    </source>
</evidence>
<accession>Q0TLL4</accession>
<protein>
    <recommendedName>
        <fullName evidence="1">S-adenosylmethionine decarboxylase proenzyme</fullName>
        <shortName evidence="1">AdoMetDC</shortName>
        <shortName evidence="1">SAMDC</shortName>
        <ecNumber evidence="1">4.1.1.50</ecNumber>
    </recommendedName>
    <component>
        <recommendedName>
            <fullName evidence="1">S-adenosylmethionine decarboxylase beta chain</fullName>
        </recommendedName>
    </component>
    <component>
        <recommendedName>
            <fullName evidence="1">S-adenosylmethionine decarboxylase alpha chain</fullName>
        </recommendedName>
    </component>
</protein>
<reference key="1">
    <citation type="journal article" date="2006" name="Mol. Microbiol.">
        <title>Role of pathogenicity island-associated integrases in the genome plasticity of uropathogenic Escherichia coli strain 536.</title>
        <authorList>
            <person name="Hochhut B."/>
            <person name="Wilde C."/>
            <person name="Balling G."/>
            <person name="Middendorf B."/>
            <person name="Dobrindt U."/>
            <person name="Brzuszkiewicz E."/>
            <person name="Gottschalk G."/>
            <person name="Carniel E."/>
            <person name="Hacker J."/>
        </authorList>
    </citation>
    <scope>NUCLEOTIDE SEQUENCE [LARGE SCALE GENOMIC DNA]</scope>
    <source>
        <strain>536 / UPEC</strain>
    </source>
</reference>
<feature type="chain" id="PRO_0000273595" description="S-adenosylmethionine decarboxylase beta chain" evidence="1">
    <location>
        <begin position="1"/>
        <end position="111"/>
    </location>
</feature>
<feature type="chain" id="PRO_0000273596" description="S-adenosylmethionine decarboxylase alpha chain" evidence="1">
    <location>
        <begin position="112"/>
        <end position="264"/>
    </location>
</feature>
<feature type="active site" description="Schiff-base intermediate with substrate; via pyruvic acid" evidence="1">
    <location>
        <position position="112"/>
    </location>
</feature>
<feature type="active site" description="Proton acceptor; for processing activity" evidence="1">
    <location>
        <position position="117"/>
    </location>
</feature>
<feature type="active site" description="Proton donor; for catalytic activity" evidence="1">
    <location>
        <position position="140"/>
    </location>
</feature>
<feature type="site" description="Cleavage (non-hydrolytic); by autolysis" evidence="1">
    <location>
        <begin position="111"/>
        <end position="112"/>
    </location>
</feature>
<feature type="modified residue" description="Pyruvic acid (Ser); by autocatalysis" evidence="1">
    <location>
        <position position="112"/>
    </location>
</feature>
<proteinExistence type="inferred from homology"/>
<dbReference type="EC" id="4.1.1.50" evidence="1"/>
<dbReference type="EMBL" id="CP000247">
    <property type="protein sequence ID" value="ABG68167.1"/>
    <property type="molecule type" value="Genomic_DNA"/>
</dbReference>
<dbReference type="RefSeq" id="WP_000734302.1">
    <property type="nucleotide sequence ID" value="NC_008253.1"/>
</dbReference>
<dbReference type="KEGG" id="ecp:ECP_0127"/>
<dbReference type="HOGENOM" id="CLU_092007_0_0_6"/>
<dbReference type="UniPathway" id="UPA00331">
    <property type="reaction ID" value="UER00451"/>
</dbReference>
<dbReference type="Proteomes" id="UP000009182">
    <property type="component" value="Chromosome"/>
</dbReference>
<dbReference type="GO" id="GO:0005829">
    <property type="term" value="C:cytosol"/>
    <property type="evidence" value="ECO:0007669"/>
    <property type="project" value="TreeGrafter"/>
</dbReference>
<dbReference type="GO" id="GO:0004014">
    <property type="term" value="F:adenosylmethionine decarboxylase activity"/>
    <property type="evidence" value="ECO:0007669"/>
    <property type="project" value="UniProtKB-UniRule"/>
</dbReference>
<dbReference type="GO" id="GO:0008295">
    <property type="term" value="P:spermidine biosynthetic process"/>
    <property type="evidence" value="ECO:0007669"/>
    <property type="project" value="UniProtKB-UniRule"/>
</dbReference>
<dbReference type="FunFam" id="3.60.90.10:FF:000001">
    <property type="entry name" value="S-adenosylmethionine decarboxylase proenzyme"/>
    <property type="match status" value="1"/>
</dbReference>
<dbReference type="Gene3D" id="3.60.90.10">
    <property type="entry name" value="S-adenosylmethionine decarboxylase"/>
    <property type="match status" value="1"/>
</dbReference>
<dbReference type="HAMAP" id="MF_00465">
    <property type="entry name" value="AdoMetDC_2"/>
    <property type="match status" value="1"/>
</dbReference>
<dbReference type="InterPro" id="IPR003826">
    <property type="entry name" value="AdoMetDC_fam_prok"/>
</dbReference>
<dbReference type="InterPro" id="IPR009165">
    <property type="entry name" value="S-AdoMet_deCO2ase_bac"/>
</dbReference>
<dbReference type="InterPro" id="IPR016067">
    <property type="entry name" value="S-AdoMet_deCO2ase_core"/>
</dbReference>
<dbReference type="NCBIfam" id="TIGR03331">
    <property type="entry name" value="SAM_DCase_Eco"/>
    <property type="match status" value="1"/>
</dbReference>
<dbReference type="PANTHER" id="PTHR33866">
    <property type="entry name" value="S-ADENOSYLMETHIONINE DECARBOXYLASE PROENZYME"/>
    <property type="match status" value="1"/>
</dbReference>
<dbReference type="PANTHER" id="PTHR33866:SF1">
    <property type="entry name" value="S-ADENOSYLMETHIONINE DECARBOXYLASE PROENZYME"/>
    <property type="match status" value="1"/>
</dbReference>
<dbReference type="Pfam" id="PF02675">
    <property type="entry name" value="AdoMet_dc"/>
    <property type="match status" value="1"/>
</dbReference>
<dbReference type="PIRSF" id="PIRSF001356">
    <property type="entry name" value="SAM_decarboxylas"/>
    <property type="match status" value="1"/>
</dbReference>
<dbReference type="SUPFAM" id="SSF56276">
    <property type="entry name" value="S-adenosylmethionine decarboxylase"/>
    <property type="match status" value="1"/>
</dbReference>
<name>SPED_ECOL5</name>
<gene>
    <name evidence="1" type="primary">speD</name>
    <name type="ordered locus">ECP_0127</name>
</gene>
<sequence length="264" mass="30429">MKKLKLHGFNNLTKSLSFCIYDICYAKTTEERDGYIAYIDELYNANRLTEILSETCSIIGANILNIARQDYEPQGASVTILVSEEPVDPKLIDKTEHPGPLPETVVAHLDKSHICVHTYPESHPEGGLCTFRADIEVSTCGVISPLKALNYLIHQLESDIVTIDYRVRGFTRDINGMKHFIDHEINSIQNFMSEDMKALYDMVDVNVYQENIFHTKMLLKEFDLKHYMFHTKPEDLTDSERQEITAALWKEMREIYYGRNMPAV</sequence>
<comment type="function">
    <text evidence="1">Catalyzes the decarboxylation of S-adenosylmethionine to S-adenosylmethioninamine (dcAdoMet), the propylamine donor required for the synthesis of the polyamines spermine and spermidine from the diamine putrescine.</text>
</comment>
<comment type="catalytic activity">
    <reaction evidence="1">
        <text>S-adenosyl-L-methionine + H(+) = S-adenosyl 3-(methylsulfanyl)propylamine + CO2</text>
        <dbReference type="Rhea" id="RHEA:15981"/>
        <dbReference type="ChEBI" id="CHEBI:15378"/>
        <dbReference type="ChEBI" id="CHEBI:16526"/>
        <dbReference type="ChEBI" id="CHEBI:57443"/>
        <dbReference type="ChEBI" id="CHEBI:59789"/>
        <dbReference type="EC" id="4.1.1.50"/>
    </reaction>
</comment>
<comment type="cofactor">
    <cofactor evidence="1">
        <name>pyruvate</name>
        <dbReference type="ChEBI" id="CHEBI:15361"/>
    </cofactor>
    <text evidence="1">Binds 1 pyruvoyl group covalently per subunit.</text>
</comment>
<comment type="pathway">
    <text evidence="1">Amine and polyamine biosynthesis; S-adenosylmethioninamine biosynthesis; S-adenosylmethioninamine from S-adenosyl-L-methionine: step 1/1.</text>
</comment>
<comment type="subunit">
    <text evidence="1">Heterooctamer of four alpha and four beta chains arranged as a tetramer of alpha/beta heterodimers.</text>
</comment>
<comment type="PTM">
    <text evidence="1">Is synthesized initially as an inactive proenzyme. Formation of the active enzyme involves a self-maturation process in which the active site pyruvoyl group is generated from an internal serine residue via an autocatalytic post-translational modification. Two non-identical subunits are generated from the proenzyme in this reaction, and the pyruvate is formed at the N-terminus of the alpha chain, which is derived from the carboxyl end of the proenzyme. The post-translation cleavage follows an unusual pathway, termed non-hydrolytic serinolysis, in which the side chain hydroxyl group of the serine supplies its oxygen atom to form the C-terminus of the beta chain, while the remainder of the serine residue undergoes an oxidative deamination to produce ammonia and the pyruvoyl group blocking the N-terminus of the alpha chain.</text>
</comment>
<comment type="similarity">
    <text evidence="1">Belongs to the prokaryotic AdoMetDC family. Type 2 subfamily.</text>
</comment>
<keyword id="KW-0068">Autocatalytic cleavage</keyword>
<keyword id="KW-0210">Decarboxylase</keyword>
<keyword id="KW-0456">Lyase</keyword>
<keyword id="KW-0620">Polyamine biosynthesis</keyword>
<keyword id="KW-0670">Pyruvate</keyword>
<keyword id="KW-0949">S-adenosyl-L-methionine</keyword>
<keyword id="KW-0704">Schiff base</keyword>
<keyword id="KW-0745">Spermidine biosynthesis</keyword>
<keyword id="KW-0865">Zymogen</keyword>
<organism>
    <name type="scientific">Escherichia coli O6:K15:H31 (strain 536 / UPEC)</name>
    <dbReference type="NCBI Taxonomy" id="362663"/>
    <lineage>
        <taxon>Bacteria</taxon>
        <taxon>Pseudomonadati</taxon>
        <taxon>Pseudomonadota</taxon>
        <taxon>Gammaproteobacteria</taxon>
        <taxon>Enterobacterales</taxon>
        <taxon>Enterobacteriaceae</taxon>
        <taxon>Escherichia</taxon>
    </lineage>
</organism>